<name>RIPL2_DANRE</name>
<proteinExistence type="evidence at transcript level"/>
<reference key="1">
    <citation type="journal article" date="2013" name="Nature">
        <title>The zebrafish reference genome sequence and its relationship to the human genome.</title>
        <authorList>
            <person name="Howe K."/>
            <person name="Clark M.D."/>
            <person name="Torroja C.F."/>
            <person name="Torrance J."/>
            <person name="Berthelot C."/>
            <person name="Muffato M."/>
            <person name="Collins J.E."/>
            <person name="Humphray S."/>
            <person name="McLaren K."/>
            <person name="Matthews L."/>
            <person name="McLaren S."/>
            <person name="Sealy I."/>
            <person name="Caccamo M."/>
            <person name="Churcher C."/>
            <person name="Scott C."/>
            <person name="Barrett J.C."/>
            <person name="Koch R."/>
            <person name="Rauch G.J."/>
            <person name="White S."/>
            <person name="Chow W."/>
            <person name="Kilian B."/>
            <person name="Quintais L.T."/>
            <person name="Guerra-Assuncao J.A."/>
            <person name="Zhou Y."/>
            <person name="Gu Y."/>
            <person name="Yen J."/>
            <person name="Vogel J.H."/>
            <person name="Eyre T."/>
            <person name="Redmond S."/>
            <person name="Banerjee R."/>
            <person name="Chi J."/>
            <person name="Fu B."/>
            <person name="Langley E."/>
            <person name="Maguire S.F."/>
            <person name="Laird G.K."/>
            <person name="Lloyd D."/>
            <person name="Kenyon E."/>
            <person name="Donaldson S."/>
            <person name="Sehra H."/>
            <person name="Almeida-King J."/>
            <person name="Loveland J."/>
            <person name="Trevanion S."/>
            <person name="Jones M."/>
            <person name="Quail M."/>
            <person name="Willey D."/>
            <person name="Hunt A."/>
            <person name="Burton J."/>
            <person name="Sims S."/>
            <person name="McLay K."/>
            <person name="Plumb B."/>
            <person name="Davis J."/>
            <person name="Clee C."/>
            <person name="Oliver K."/>
            <person name="Clark R."/>
            <person name="Riddle C."/>
            <person name="Elliot D."/>
            <person name="Threadgold G."/>
            <person name="Harden G."/>
            <person name="Ware D."/>
            <person name="Begum S."/>
            <person name="Mortimore B."/>
            <person name="Kerry G."/>
            <person name="Heath P."/>
            <person name="Phillimore B."/>
            <person name="Tracey A."/>
            <person name="Corby N."/>
            <person name="Dunn M."/>
            <person name="Johnson C."/>
            <person name="Wood J."/>
            <person name="Clark S."/>
            <person name="Pelan S."/>
            <person name="Griffiths G."/>
            <person name="Smith M."/>
            <person name="Glithero R."/>
            <person name="Howden P."/>
            <person name="Barker N."/>
            <person name="Lloyd C."/>
            <person name="Stevens C."/>
            <person name="Harley J."/>
            <person name="Holt K."/>
            <person name="Panagiotidis G."/>
            <person name="Lovell J."/>
            <person name="Beasley H."/>
            <person name="Henderson C."/>
            <person name="Gordon D."/>
            <person name="Auger K."/>
            <person name="Wright D."/>
            <person name="Collins J."/>
            <person name="Raisen C."/>
            <person name="Dyer L."/>
            <person name="Leung K."/>
            <person name="Robertson L."/>
            <person name="Ambridge K."/>
            <person name="Leongamornlert D."/>
            <person name="McGuire S."/>
            <person name="Gilderthorp R."/>
            <person name="Griffiths C."/>
            <person name="Manthravadi D."/>
            <person name="Nichol S."/>
            <person name="Barker G."/>
            <person name="Whitehead S."/>
            <person name="Kay M."/>
            <person name="Brown J."/>
            <person name="Murnane C."/>
            <person name="Gray E."/>
            <person name="Humphries M."/>
            <person name="Sycamore N."/>
            <person name="Barker D."/>
            <person name="Saunders D."/>
            <person name="Wallis J."/>
            <person name="Babbage A."/>
            <person name="Hammond S."/>
            <person name="Mashreghi-Mohammadi M."/>
            <person name="Barr L."/>
            <person name="Martin S."/>
            <person name="Wray P."/>
            <person name="Ellington A."/>
            <person name="Matthews N."/>
            <person name="Ellwood M."/>
            <person name="Woodmansey R."/>
            <person name="Clark G."/>
            <person name="Cooper J."/>
            <person name="Tromans A."/>
            <person name="Grafham D."/>
            <person name="Skuce C."/>
            <person name="Pandian R."/>
            <person name="Andrews R."/>
            <person name="Harrison E."/>
            <person name="Kimberley A."/>
            <person name="Garnett J."/>
            <person name="Fosker N."/>
            <person name="Hall R."/>
            <person name="Garner P."/>
            <person name="Kelly D."/>
            <person name="Bird C."/>
            <person name="Palmer S."/>
            <person name="Gehring I."/>
            <person name="Berger A."/>
            <person name="Dooley C.M."/>
            <person name="Ersan-Urun Z."/>
            <person name="Eser C."/>
            <person name="Geiger H."/>
            <person name="Geisler M."/>
            <person name="Karotki L."/>
            <person name="Kirn A."/>
            <person name="Konantz J."/>
            <person name="Konantz M."/>
            <person name="Oberlander M."/>
            <person name="Rudolph-Geiger S."/>
            <person name="Teucke M."/>
            <person name="Lanz C."/>
            <person name="Raddatz G."/>
            <person name="Osoegawa K."/>
            <person name="Zhu B."/>
            <person name="Rapp A."/>
            <person name="Widaa S."/>
            <person name="Langford C."/>
            <person name="Yang F."/>
            <person name="Schuster S.C."/>
            <person name="Carter N.P."/>
            <person name="Harrow J."/>
            <person name="Ning Z."/>
            <person name="Herrero J."/>
            <person name="Searle S.M."/>
            <person name="Enright A."/>
            <person name="Geisler R."/>
            <person name="Plasterk R.H."/>
            <person name="Lee C."/>
            <person name="Westerfield M."/>
            <person name="de Jong P.J."/>
            <person name="Zon L.I."/>
            <person name="Postlethwait J.H."/>
            <person name="Nusslein-Volhard C."/>
            <person name="Hubbard T.J."/>
            <person name="Roest Crollius H."/>
            <person name="Rogers J."/>
            <person name="Stemple D.L."/>
        </authorList>
    </citation>
    <scope>NUCLEOTIDE SEQUENCE [LARGE SCALE GENOMIC DNA]</scope>
    <source>
        <strain>Tuebingen</strain>
    </source>
</reference>
<reference key="2">
    <citation type="submission" date="2007-03" db="EMBL/GenBank/DDBJ databases">
        <authorList>
            <consortium name="NIH - Zebrafish Gene Collection (ZGC) project"/>
        </authorList>
    </citation>
    <scope>NUCLEOTIDE SEQUENCE [LARGE SCALE MRNA]</scope>
    <source>
        <tissue>Embryo</tissue>
    </source>
</reference>
<accession>A4IGC3</accession>
<accession>A5WUX4</accession>
<sequence>MEGRHDNSPTQAFDKDVLELTVEDVYDISYVIGRDLLKVNTGGNREISDLQFKIVRVLEMFETMVNKYNLSLEELRMEMDNMRTETDRVVAEGSSGNINTVGPNKLVVDLKDPNRPRFTMQELKEVLQERNKLKAQLLVAQEELQLYKSGVLSSQQNMVEVNLETVPQSEPLRSSITEESKEKSTIQKLFSFRPK</sequence>
<keyword id="KW-0966">Cell projection</keyword>
<keyword id="KW-0969">Cilium</keyword>
<keyword id="KW-0175">Coiled coil</keyword>
<keyword id="KW-0963">Cytoplasm</keyword>
<keyword id="KW-0206">Cytoskeleton</keyword>
<keyword id="KW-0653">Protein transport</keyword>
<keyword id="KW-1185">Reference proteome</keyword>
<keyword id="KW-0813">Transport</keyword>
<feature type="chain" id="PRO_0000317008" description="RILP-like protein 2">
    <location>
        <begin position="1"/>
        <end position="195"/>
    </location>
</feature>
<feature type="domain" description="RH1" evidence="3">
    <location>
        <begin position="8"/>
        <end position="92"/>
    </location>
</feature>
<feature type="domain" description="RH2" evidence="4">
    <location>
        <begin position="115"/>
        <end position="185"/>
    </location>
</feature>
<feature type="coiled-coil region" evidence="2">
    <location>
        <begin position="58"/>
        <end position="149"/>
    </location>
</feature>
<feature type="sequence conflict" description="In Ref. 2; AAI35028." evidence="5" ref="2">
    <original>T</original>
    <variation>M</variation>
    <location>
        <position position="86"/>
    </location>
</feature>
<feature type="sequence conflict" description="In Ref. 2; AAI35028." evidence="5" ref="2">
    <original>L</original>
    <variation>S</variation>
    <location>
        <position position="172"/>
    </location>
</feature>
<feature type="sequence conflict" description="In Ref. 2; AAI35028." evidence="5" ref="2">
    <original>E</original>
    <variation>D</variation>
    <location>
        <position position="179"/>
    </location>
</feature>
<feature type="sequence conflict" description="In Ref. 2; AAI35028." evidence="5" ref="2">
    <original>P</original>
    <variation>Q</variation>
    <location>
        <position position="194"/>
    </location>
</feature>
<protein>
    <recommendedName>
        <fullName>RILP-like protein 2</fullName>
    </recommendedName>
    <alternativeName>
        <fullName>Rab-interacting lysosomal-like protein 2</fullName>
    </alternativeName>
</protein>
<evidence type="ECO:0000250" key="1"/>
<evidence type="ECO:0000255" key="2"/>
<evidence type="ECO:0000255" key="3">
    <source>
        <dbReference type="PROSITE-ProRule" id="PRU01112"/>
    </source>
</evidence>
<evidence type="ECO:0000255" key="4">
    <source>
        <dbReference type="PROSITE-ProRule" id="PRU01113"/>
    </source>
</evidence>
<evidence type="ECO:0000305" key="5"/>
<dbReference type="EMBL" id="CR847941">
    <property type="protein sequence ID" value="CAN87839.1"/>
    <property type="molecule type" value="Genomic_DNA"/>
</dbReference>
<dbReference type="EMBL" id="BC135027">
    <property type="protein sequence ID" value="AAI35028.1"/>
    <property type="molecule type" value="mRNA"/>
</dbReference>
<dbReference type="RefSeq" id="NP_001077319.1">
    <property type="nucleotide sequence ID" value="NM_001083850.1"/>
</dbReference>
<dbReference type="SMR" id="A4IGC3"/>
<dbReference type="FunCoup" id="A4IGC3">
    <property type="interactions" value="1305"/>
</dbReference>
<dbReference type="STRING" id="7955.ENSDARP00000030815"/>
<dbReference type="PaxDb" id="7955-ENSDARP00000030815"/>
<dbReference type="PeptideAtlas" id="A4IGC3"/>
<dbReference type="Ensembl" id="ENSDART00000028954">
    <property type="protein sequence ID" value="ENSDARP00000030815"/>
    <property type="gene ID" value="ENSDARG00000024818"/>
</dbReference>
<dbReference type="GeneID" id="100004718"/>
<dbReference type="KEGG" id="dre:100004718"/>
<dbReference type="AGR" id="ZFIN:ZDB-GENE-030131-6682"/>
<dbReference type="CTD" id="196383"/>
<dbReference type="ZFIN" id="ZDB-GENE-030131-6682">
    <property type="gene designation" value="rilpl2"/>
</dbReference>
<dbReference type="eggNOG" id="ENOG502S08B">
    <property type="taxonomic scope" value="Eukaryota"/>
</dbReference>
<dbReference type="HOGENOM" id="CLU_096533_1_0_1"/>
<dbReference type="InParanoid" id="A4IGC3"/>
<dbReference type="OMA" id="CYININL"/>
<dbReference type="OrthoDB" id="10069524at2759"/>
<dbReference type="PhylomeDB" id="A4IGC3"/>
<dbReference type="PRO" id="PR:A4IGC3"/>
<dbReference type="Proteomes" id="UP000000437">
    <property type="component" value="Alternate scaffold 5"/>
</dbReference>
<dbReference type="Proteomes" id="UP000000437">
    <property type="component" value="Chromosome 5"/>
</dbReference>
<dbReference type="Bgee" id="ENSDARG00000024818">
    <property type="expression patterns" value="Expressed in swim bladder and 20 other cell types or tissues"/>
</dbReference>
<dbReference type="GO" id="GO:0005813">
    <property type="term" value="C:centrosome"/>
    <property type="evidence" value="ECO:0000250"/>
    <property type="project" value="UniProtKB"/>
</dbReference>
<dbReference type="GO" id="GO:0036064">
    <property type="term" value="C:ciliary basal body"/>
    <property type="evidence" value="ECO:0000318"/>
    <property type="project" value="GO_Central"/>
</dbReference>
<dbReference type="GO" id="GO:0005929">
    <property type="term" value="C:cilium"/>
    <property type="evidence" value="ECO:0000250"/>
    <property type="project" value="UniProtKB"/>
</dbReference>
<dbReference type="GO" id="GO:0005737">
    <property type="term" value="C:cytoplasm"/>
    <property type="evidence" value="ECO:0000318"/>
    <property type="project" value="GO_Central"/>
</dbReference>
<dbReference type="GO" id="GO:0005829">
    <property type="term" value="C:cytosol"/>
    <property type="evidence" value="ECO:0007669"/>
    <property type="project" value="UniProtKB-SubCell"/>
</dbReference>
<dbReference type="GO" id="GO:0016020">
    <property type="term" value="C:membrane"/>
    <property type="evidence" value="ECO:0007669"/>
    <property type="project" value="GOC"/>
</dbReference>
<dbReference type="GO" id="GO:0051959">
    <property type="term" value="F:dynein light intermediate chain binding"/>
    <property type="evidence" value="ECO:0000318"/>
    <property type="project" value="GO_Central"/>
</dbReference>
<dbReference type="GO" id="GO:0046983">
    <property type="term" value="F:protein dimerization activity"/>
    <property type="evidence" value="ECO:0007669"/>
    <property type="project" value="InterPro"/>
</dbReference>
<dbReference type="GO" id="GO:0031267">
    <property type="term" value="F:small GTPase binding"/>
    <property type="evidence" value="ECO:0000318"/>
    <property type="project" value="GO_Central"/>
</dbReference>
<dbReference type="GO" id="GO:0060271">
    <property type="term" value="P:cilium assembly"/>
    <property type="evidence" value="ECO:0000318"/>
    <property type="project" value="GO_Central"/>
</dbReference>
<dbReference type="GO" id="GO:0003382">
    <property type="term" value="P:epithelial cell morphogenesis"/>
    <property type="evidence" value="ECO:0000250"/>
    <property type="project" value="UniProtKB"/>
</dbReference>
<dbReference type="GO" id="GO:1903445">
    <property type="term" value="P:protein transport from ciliary membrane to plasma membrane"/>
    <property type="evidence" value="ECO:0000250"/>
    <property type="project" value="UniProtKB"/>
</dbReference>
<dbReference type="CDD" id="cd14445">
    <property type="entry name" value="RILP-like"/>
    <property type="match status" value="1"/>
</dbReference>
<dbReference type="FunFam" id="1.20.58.1770:FF:000003">
    <property type="entry name" value="RILP-like protein 2 isoform X1"/>
    <property type="match status" value="1"/>
</dbReference>
<dbReference type="Gene3D" id="1.20.58.1770">
    <property type="match status" value="1"/>
</dbReference>
<dbReference type="Gene3D" id="6.10.230.10">
    <property type="match status" value="1"/>
</dbReference>
<dbReference type="InterPro" id="IPR051241">
    <property type="entry name" value="DZIP_RILPL"/>
</dbReference>
<dbReference type="InterPro" id="IPR034743">
    <property type="entry name" value="RH1"/>
</dbReference>
<dbReference type="InterPro" id="IPR034744">
    <property type="entry name" value="RH2"/>
</dbReference>
<dbReference type="InterPro" id="IPR021563">
    <property type="entry name" value="RILP_dimer"/>
</dbReference>
<dbReference type="PANTHER" id="PTHR21502:SF2">
    <property type="entry name" value="RILP-LIKE PROTEIN 2"/>
    <property type="match status" value="1"/>
</dbReference>
<dbReference type="PANTHER" id="PTHR21502">
    <property type="entry name" value="ZINC FINGER PROTEIN DZIP1"/>
    <property type="match status" value="1"/>
</dbReference>
<dbReference type="Pfam" id="PF09744">
    <property type="entry name" value="RH1"/>
    <property type="match status" value="1"/>
</dbReference>
<dbReference type="Pfam" id="PF11461">
    <property type="entry name" value="RILP"/>
    <property type="match status" value="1"/>
</dbReference>
<dbReference type="SUPFAM" id="SSF161256">
    <property type="entry name" value="RILP dimerisation region"/>
    <property type="match status" value="1"/>
</dbReference>
<dbReference type="PROSITE" id="PS51776">
    <property type="entry name" value="RH1"/>
    <property type="match status" value="1"/>
</dbReference>
<dbReference type="PROSITE" id="PS51777">
    <property type="entry name" value="RH2"/>
    <property type="match status" value="1"/>
</dbReference>
<comment type="function">
    <text evidence="1">Involved in cell shape and neuronal morphogenesis, positively regulating the establishment and maintenance of dendritic spines. Plays a role in cellular protein transport (By similarity).</text>
</comment>
<comment type="subcellular location">
    <subcellularLocation>
        <location evidence="1">Cytoplasm</location>
        <location evidence="1">Cytosol</location>
    </subcellularLocation>
    <subcellularLocation>
        <location evidence="1">Cytoplasm</location>
        <location evidence="1">Cytoskeleton</location>
        <location evidence="1">Microtubule organizing center</location>
        <location evidence="1">Centrosome</location>
    </subcellularLocation>
    <subcellularLocation>
        <location evidence="1">Cell projection</location>
        <location evidence="1">Cilium</location>
    </subcellularLocation>
</comment>
<comment type="similarity">
    <text evidence="5">Belongs to the RILPL family.</text>
</comment>
<organism>
    <name type="scientific">Danio rerio</name>
    <name type="common">Zebrafish</name>
    <name type="synonym">Brachydanio rerio</name>
    <dbReference type="NCBI Taxonomy" id="7955"/>
    <lineage>
        <taxon>Eukaryota</taxon>
        <taxon>Metazoa</taxon>
        <taxon>Chordata</taxon>
        <taxon>Craniata</taxon>
        <taxon>Vertebrata</taxon>
        <taxon>Euteleostomi</taxon>
        <taxon>Actinopterygii</taxon>
        <taxon>Neopterygii</taxon>
        <taxon>Teleostei</taxon>
        <taxon>Ostariophysi</taxon>
        <taxon>Cypriniformes</taxon>
        <taxon>Danionidae</taxon>
        <taxon>Danioninae</taxon>
        <taxon>Danio</taxon>
    </lineage>
</organism>
<gene>
    <name type="primary">rilpl2</name>
    <name type="ORF">si:ch211-275j6.7</name>
    <name type="ORF">zgc:162589</name>
</gene>